<accession>D2QYP6</accession>
<organism>
    <name type="scientific">Pirellula staleyi (strain ATCC 27377 / DSM 6068 / ICPB 4128)</name>
    <name type="common">Pirella staleyi</name>
    <dbReference type="NCBI Taxonomy" id="530564"/>
    <lineage>
        <taxon>Bacteria</taxon>
        <taxon>Pseudomonadati</taxon>
        <taxon>Planctomycetota</taxon>
        <taxon>Planctomycetia</taxon>
        <taxon>Pirellulales</taxon>
        <taxon>Pirellulaceae</taxon>
        <taxon>Pirellula</taxon>
    </lineage>
</organism>
<protein>
    <recommendedName>
        <fullName evidence="1">NAD(P)H-hydrate epimerase</fullName>
        <ecNumber evidence="1">5.1.99.6</ecNumber>
    </recommendedName>
    <alternativeName>
        <fullName evidence="1">NAD(P)HX epimerase</fullName>
    </alternativeName>
</protein>
<evidence type="ECO:0000255" key="1">
    <source>
        <dbReference type="HAMAP-Rule" id="MF_01966"/>
    </source>
</evidence>
<gene>
    <name evidence="1" type="primary">nnrE</name>
    <name type="ordered locus">Psta_3544</name>
</gene>
<reference key="1">
    <citation type="journal article" date="2009" name="Stand. Genomic Sci.">
        <title>Complete genome sequence of Pirellula staleyi type strain (ATCC 27377).</title>
        <authorList>
            <person name="Clum A."/>
            <person name="Tindall B.J."/>
            <person name="Sikorski J."/>
            <person name="Ivanova N."/>
            <person name="Mavrommatis K."/>
            <person name="Lucas S."/>
            <person name="Glavina del Rio T."/>
            <person name="Nolan M."/>
            <person name="Chen F."/>
            <person name="Tice H."/>
            <person name="Pitluck S."/>
            <person name="Cheng J.F."/>
            <person name="Chertkov O."/>
            <person name="Brettin T."/>
            <person name="Han C."/>
            <person name="Detter J.C."/>
            <person name="Kuske C."/>
            <person name="Bruce D."/>
            <person name="Goodwin L."/>
            <person name="Ovchinikova G."/>
            <person name="Pati A."/>
            <person name="Mikhailova N."/>
            <person name="Chen A."/>
            <person name="Palaniappan K."/>
            <person name="Land M."/>
            <person name="Hauser L."/>
            <person name="Chang Y.J."/>
            <person name="Jeffries C.D."/>
            <person name="Chain P."/>
            <person name="Rohde M."/>
            <person name="Goker M."/>
            <person name="Bristow J."/>
            <person name="Eisen J.A."/>
            <person name="Markowitz V."/>
            <person name="Hugenholtz P."/>
            <person name="Kyrpides N.C."/>
            <person name="Klenk H.P."/>
            <person name="Lapidus A."/>
        </authorList>
    </citation>
    <scope>NUCLEOTIDE SEQUENCE [LARGE SCALE GENOMIC DNA]</scope>
    <source>
        <strain>ATCC 27377 / DSM 6068 / ICPB 4128</strain>
    </source>
</reference>
<comment type="function">
    <text evidence="1">Catalyzes the epimerization of the S- and R-forms of NAD(P)HX, a damaged form of NAD(P)H that is a result of enzymatic or heat-dependent hydration. This is a prerequisite for the S-specific NAD(P)H-hydrate dehydratase to allow the repair of both epimers of NAD(P)HX.</text>
</comment>
<comment type="catalytic activity">
    <reaction evidence="1">
        <text>(6R)-NADHX = (6S)-NADHX</text>
        <dbReference type="Rhea" id="RHEA:32215"/>
        <dbReference type="ChEBI" id="CHEBI:64074"/>
        <dbReference type="ChEBI" id="CHEBI:64075"/>
        <dbReference type="EC" id="5.1.99.6"/>
    </reaction>
</comment>
<comment type="catalytic activity">
    <reaction evidence="1">
        <text>(6R)-NADPHX = (6S)-NADPHX</text>
        <dbReference type="Rhea" id="RHEA:32227"/>
        <dbReference type="ChEBI" id="CHEBI:64076"/>
        <dbReference type="ChEBI" id="CHEBI:64077"/>
        <dbReference type="EC" id="5.1.99.6"/>
    </reaction>
</comment>
<comment type="cofactor">
    <cofactor evidence="1">
        <name>K(+)</name>
        <dbReference type="ChEBI" id="CHEBI:29103"/>
    </cofactor>
    <text evidence="1">Binds 1 potassium ion per subunit.</text>
</comment>
<comment type="similarity">
    <text evidence="1">Belongs to the NnrE/AIBP family.</text>
</comment>
<proteinExistence type="inferred from homology"/>
<feature type="chain" id="PRO_0000416372" description="NAD(P)H-hydrate epimerase">
    <location>
        <begin position="1"/>
        <end position="227"/>
    </location>
</feature>
<feature type="domain" description="YjeF N-terminal" evidence="1">
    <location>
        <begin position="12"/>
        <end position="221"/>
    </location>
</feature>
<feature type="binding site" evidence="1">
    <location>
        <begin position="59"/>
        <end position="63"/>
    </location>
    <ligand>
        <name>(6S)-NADPHX</name>
        <dbReference type="ChEBI" id="CHEBI:64076"/>
    </ligand>
</feature>
<feature type="binding site" evidence="1">
    <location>
        <position position="60"/>
    </location>
    <ligand>
        <name>K(+)</name>
        <dbReference type="ChEBI" id="CHEBI:29103"/>
    </ligand>
</feature>
<feature type="binding site" evidence="1">
    <location>
        <position position="131"/>
    </location>
    <ligand>
        <name>K(+)</name>
        <dbReference type="ChEBI" id="CHEBI:29103"/>
    </ligand>
</feature>
<feature type="binding site" evidence="1">
    <location>
        <begin position="135"/>
        <end position="141"/>
    </location>
    <ligand>
        <name>(6S)-NADPHX</name>
        <dbReference type="ChEBI" id="CHEBI:64076"/>
    </ligand>
</feature>
<feature type="binding site" evidence="1">
    <location>
        <position position="164"/>
    </location>
    <ligand>
        <name>(6S)-NADPHX</name>
        <dbReference type="ChEBI" id="CHEBI:64076"/>
    </ligand>
</feature>
<feature type="binding site" evidence="1">
    <location>
        <position position="167"/>
    </location>
    <ligand>
        <name>K(+)</name>
        <dbReference type="ChEBI" id="CHEBI:29103"/>
    </ligand>
</feature>
<keyword id="KW-0413">Isomerase</keyword>
<keyword id="KW-0479">Metal-binding</keyword>
<keyword id="KW-0520">NAD</keyword>
<keyword id="KW-0521">NADP</keyword>
<keyword id="KW-0547">Nucleotide-binding</keyword>
<keyword id="KW-0630">Potassium</keyword>
<keyword id="KW-1185">Reference proteome</keyword>
<name>NNRE_PIRSD</name>
<dbReference type="EC" id="5.1.99.6" evidence="1"/>
<dbReference type="EMBL" id="CP001848">
    <property type="protein sequence ID" value="ADB18205.1"/>
    <property type="molecule type" value="Genomic_DNA"/>
</dbReference>
<dbReference type="SMR" id="D2QYP6"/>
<dbReference type="STRING" id="530564.Psta_3544"/>
<dbReference type="KEGG" id="psl:Psta_3544"/>
<dbReference type="eggNOG" id="COG0062">
    <property type="taxonomic scope" value="Bacteria"/>
</dbReference>
<dbReference type="HOGENOM" id="CLU_024853_0_1_0"/>
<dbReference type="OrthoDB" id="9806925at2"/>
<dbReference type="Proteomes" id="UP000001887">
    <property type="component" value="Chromosome"/>
</dbReference>
<dbReference type="GO" id="GO:0046872">
    <property type="term" value="F:metal ion binding"/>
    <property type="evidence" value="ECO:0007669"/>
    <property type="project" value="UniProtKB-KW"/>
</dbReference>
<dbReference type="GO" id="GO:0052856">
    <property type="term" value="F:NAD(P)HX epimerase activity"/>
    <property type="evidence" value="ECO:0007669"/>
    <property type="project" value="UniProtKB-UniRule"/>
</dbReference>
<dbReference type="GO" id="GO:0000166">
    <property type="term" value="F:nucleotide binding"/>
    <property type="evidence" value="ECO:0007669"/>
    <property type="project" value="UniProtKB-KW"/>
</dbReference>
<dbReference type="Gene3D" id="3.40.50.10260">
    <property type="entry name" value="YjeF N-terminal domain"/>
    <property type="match status" value="1"/>
</dbReference>
<dbReference type="HAMAP" id="MF_01966">
    <property type="entry name" value="NADHX_epimerase"/>
    <property type="match status" value="1"/>
</dbReference>
<dbReference type="InterPro" id="IPR004443">
    <property type="entry name" value="YjeF_N_dom"/>
</dbReference>
<dbReference type="InterPro" id="IPR036652">
    <property type="entry name" value="YjeF_N_dom_sf"/>
</dbReference>
<dbReference type="NCBIfam" id="TIGR00197">
    <property type="entry name" value="yjeF_nterm"/>
    <property type="match status" value="1"/>
</dbReference>
<dbReference type="Pfam" id="PF03853">
    <property type="entry name" value="YjeF_N"/>
    <property type="match status" value="1"/>
</dbReference>
<dbReference type="SUPFAM" id="SSF64153">
    <property type="entry name" value="YjeF N-terminal domain-like"/>
    <property type="match status" value="1"/>
</dbReference>
<dbReference type="PROSITE" id="PS51385">
    <property type="entry name" value="YJEF_N"/>
    <property type="match status" value="1"/>
</dbReference>
<sequence>MDLQRIYDRRKSRLVDELAIAKYGMLGLMLMENAGRNVAYELLARTPCRRVVIVVGKGNNGGDGWVIARHLDAAGVDVIVLLTTAPNEFRGDAAVNYAIANLAKIKIIDLSRTPTAEAIATHFAEADWLVDAMLGTGATGEPRGAMRLAIEAINQSSVRTLAVDLPTGIDCDSGGAATVAVRADVTCTFVTLKPCCQVAACRSYLGEVRVIDIGVPRALLEEIDAMP</sequence>